<evidence type="ECO:0000255" key="1"/>
<evidence type="ECO:0000255" key="2">
    <source>
        <dbReference type="PROSITE-ProRule" id="PRU00258"/>
    </source>
</evidence>
<evidence type="ECO:0000269" key="3">
    <source>
    </source>
</evidence>
<evidence type="ECO:0000303" key="4">
    <source>
    </source>
</evidence>
<evidence type="ECO:0000305" key="5"/>
<evidence type="ECO:0000305" key="6">
    <source>
    </source>
</evidence>
<dbReference type="EC" id="1.2.1.101" evidence="3"/>
<dbReference type="EMBL" id="MW322046">
    <property type="protein sequence ID" value="QQO98485.1"/>
    <property type="molecule type" value="Genomic_DNA"/>
</dbReference>
<dbReference type="CDD" id="cd05930">
    <property type="entry name" value="A_NRPS"/>
    <property type="match status" value="1"/>
</dbReference>
<dbReference type="CDD" id="cd05235">
    <property type="entry name" value="SDR_e1"/>
    <property type="match status" value="1"/>
</dbReference>
<dbReference type="Gene3D" id="3.30.300.30">
    <property type="match status" value="1"/>
</dbReference>
<dbReference type="Gene3D" id="1.10.1200.10">
    <property type="entry name" value="ACP-like"/>
    <property type="match status" value="1"/>
</dbReference>
<dbReference type="Gene3D" id="3.40.50.12780">
    <property type="entry name" value="N-terminal domain of ligase-like"/>
    <property type="match status" value="1"/>
</dbReference>
<dbReference type="Gene3D" id="3.40.50.720">
    <property type="entry name" value="NAD(P)-binding Rossmann-like Domain"/>
    <property type="match status" value="1"/>
</dbReference>
<dbReference type="InterPro" id="IPR036736">
    <property type="entry name" value="ACP-like_sf"/>
</dbReference>
<dbReference type="InterPro" id="IPR045851">
    <property type="entry name" value="AMP-bd_C_sf"/>
</dbReference>
<dbReference type="InterPro" id="IPR000873">
    <property type="entry name" value="AMP-dep_synth/lig_dom"/>
</dbReference>
<dbReference type="InterPro" id="IPR042099">
    <property type="entry name" value="ANL_N_sf"/>
</dbReference>
<dbReference type="InterPro" id="IPR013120">
    <property type="entry name" value="Far_NAD-bd"/>
</dbReference>
<dbReference type="InterPro" id="IPR036291">
    <property type="entry name" value="NAD(P)-bd_dom_sf"/>
</dbReference>
<dbReference type="InterPro" id="IPR009081">
    <property type="entry name" value="PP-bd_ACP"/>
</dbReference>
<dbReference type="InterPro" id="IPR010080">
    <property type="entry name" value="Thioester_reductase-like_dom"/>
</dbReference>
<dbReference type="NCBIfam" id="TIGR01746">
    <property type="entry name" value="Thioester-redct"/>
    <property type="match status" value="1"/>
</dbReference>
<dbReference type="PANTHER" id="PTHR44845:SF6">
    <property type="entry name" value="BETA-ALANINE-ACTIVATING ENZYME"/>
    <property type="match status" value="1"/>
</dbReference>
<dbReference type="PANTHER" id="PTHR44845">
    <property type="entry name" value="CARRIER DOMAIN-CONTAINING PROTEIN"/>
    <property type="match status" value="1"/>
</dbReference>
<dbReference type="Pfam" id="PF00501">
    <property type="entry name" value="AMP-binding"/>
    <property type="match status" value="1"/>
</dbReference>
<dbReference type="Pfam" id="PF07993">
    <property type="entry name" value="NAD_binding_4"/>
    <property type="match status" value="1"/>
</dbReference>
<dbReference type="Pfam" id="PF00550">
    <property type="entry name" value="PP-binding"/>
    <property type="match status" value="1"/>
</dbReference>
<dbReference type="SUPFAM" id="SSF56801">
    <property type="entry name" value="Acetyl-CoA synthetase-like"/>
    <property type="match status" value="1"/>
</dbReference>
<dbReference type="SUPFAM" id="SSF47336">
    <property type="entry name" value="ACP-like"/>
    <property type="match status" value="1"/>
</dbReference>
<dbReference type="SUPFAM" id="SSF51735">
    <property type="entry name" value="NAD(P)-binding Rossmann-fold domains"/>
    <property type="match status" value="1"/>
</dbReference>
<dbReference type="PROSITE" id="PS50075">
    <property type="entry name" value="CARRIER"/>
    <property type="match status" value="1"/>
</dbReference>
<gene>
    <name evidence="4" type="primary">FrzA</name>
</gene>
<accession>A0A7T8F1L4</accession>
<name>FRZA_CLASX</name>
<organism>
    <name type="scientific">Cladobotryum sp</name>
    <dbReference type="NCBI Taxonomy" id="2040732"/>
    <lineage>
        <taxon>Eukaryota</taxon>
        <taxon>Fungi</taxon>
        <taxon>Dikarya</taxon>
        <taxon>Ascomycota</taxon>
        <taxon>Pezizomycotina</taxon>
        <taxon>Sordariomycetes</taxon>
        <taxon>Hypocreomycetidae</taxon>
        <taxon>Hypocreales</taxon>
        <taxon>Hypocreaceae</taxon>
        <taxon>Cladobotryum</taxon>
    </lineage>
</organism>
<protein>
    <recommendedName>
        <fullName evidence="4">Non-canonical nonribosomal peptide synthetase FrzA</fullName>
        <ecNumber evidence="3">1.2.1.101</ecNumber>
    </recommendedName>
    <alternativeName>
        <fullName evidence="4">FR901483 biosynthesis cluster protein A</fullName>
    </alternativeName>
</protein>
<comment type="function">
    <text evidence="3">Non-canonical nonribosomal peptide synthetase; part of the gene cluster that mediates the biosynthesis of the alkaloid (-)-FR901483, a potent immunosuppressant that shows efficacy in animal models and a probable inhibitor of purine nucleotide biosynthesis by targeting phosphoribosylpyrophosphate amidotransferase (PPAT) (PubMed:33372776). Within the pathway, FrzA catalyzes the reduction of L-tyrosine via its C-terminal reductase domain to produce L-tyrosinal (PubMed:33372776). The biosynthesis of (-)-FR901483 starts with the condensation of two L-tyrosines to yield (S,S)-dityrosyl-piperazine. This process occurs in 3 steps with the non-canonical nonribosomal peptide synthetase FrzA catalyzing the reduction of L-tyrosine into L-tyrosinal, the spontaneous condensation of 2 L-tyrosinal units, and the subsequent reduction by the NmrA-like family domain-containing oxidoreductase FrzB. The cytochrome P450 monooxygenase FrzC then performs coupling between N10 and C1' to morph the piperazine into a 1,4-diazabicyclo[3.2.1]octane spiro-fused to a 2,5-cyclohexadienone. The dienone portion is further reduced to cyclohexanone by the flavin-dependent reductase FrzD. The methyltranserases (MTs) FrzE and FrzF are then involved in the methylation at the C10' amine and the C4 phenolic oxygen, respectively. The order of the two MTs appear to be interchangeable. Cleavage of the C9-N10' bond by the dioxygenase FrzG then leads to formation of a conjugated iminium. In addition to the oxidation of C9, an additional dehydrogenation between C7 and C8 can occur to give a likely shunt product. The next biosynthetic step is the intramolecular aldol condensation catalyzed by the newly identified aldolase FrzH to yield an aza-tricyclic product with the formation of a C9-C3' bond (PubMed:33372776). The short-chain dehydrogenase/reductase FrzI then produces dephospho-(-)-FR901483 that is phosphorylated at C4'-OH into (-)-FR901483 by the phosphotransferase FrzJ (PubMed:33372776).</text>
</comment>
<comment type="catalytic activity">
    <reaction evidence="3">
        <text>L-tyrosinal + AMP + diphosphate + NADP(+) = L-tyrosine + ATP + NADPH + H(+)</text>
        <dbReference type="Rhea" id="RHEA:57412"/>
        <dbReference type="ChEBI" id="CHEBI:15378"/>
        <dbReference type="ChEBI" id="CHEBI:30616"/>
        <dbReference type="ChEBI" id="CHEBI:33019"/>
        <dbReference type="ChEBI" id="CHEBI:57783"/>
        <dbReference type="ChEBI" id="CHEBI:58315"/>
        <dbReference type="ChEBI" id="CHEBI:58349"/>
        <dbReference type="ChEBI" id="CHEBI:141668"/>
        <dbReference type="ChEBI" id="CHEBI:456215"/>
        <dbReference type="EC" id="1.2.1.101"/>
    </reaction>
    <physiologicalReaction direction="right-to-left" evidence="3">
        <dbReference type="Rhea" id="RHEA:57414"/>
    </physiologicalReaction>
</comment>
<comment type="cofactor">
    <cofactor evidence="2">
        <name>pantetheine 4'-phosphate</name>
        <dbReference type="ChEBI" id="CHEBI:47942"/>
    </cofactor>
</comment>
<comment type="pathway">
    <text evidence="3">Secondary metabolite biosynthesis.</text>
</comment>
<comment type="domain">
    <text evidence="6">NRP synthetases are composed of discrete domains (adenylation (A), thiolation (T) or peptidyl carrier protein (PCP) and condensation (C) domains) which when grouped together are referred to as a single module. Each module is responsible for the recognition (via the A domain) and incorporation of a single amino acid into the growing peptide product. Thus, an NRP synthetase is generally composed of one or more modules and can terminate in a thioesterase domain (TE) that releases the newly synthesized peptide from the enzyme. Occasionally, epimerase (E) domains (responsible for L- to D-amino acid conversion) are present within the NRP synthetase. FrzA contains an amino acid adenylation domain (A), a peptidyl carrier protein (PCP) domain with a phosphopantetheine prosthetic group, and a short-chain dehydrogenase/reductase terminus (R), but it does not have an identifiable condensation (C) domain required for the formation of peptide bonds during non-ribosomal peptide synthesis.</text>
</comment>
<comment type="similarity">
    <text evidence="5">Belongs to the NRP synthetase family.</text>
</comment>
<keyword id="KW-0436">Ligase</keyword>
<keyword id="KW-0511">Multifunctional enzyme</keyword>
<keyword id="KW-0560">Oxidoreductase</keyword>
<keyword id="KW-0596">Phosphopantetheine</keyword>
<keyword id="KW-0597">Phosphoprotein</keyword>
<proteinExistence type="evidence at protein level"/>
<feature type="chain" id="PRO_0000462328" description="Non-canonical nonribosomal peptide synthetase FrzA">
    <location>
        <begin position="1"/>
        <end position="1024"/>
    </location>
</feature>
<feature type="domain" description="Carrier" evidence="2">
    <location>
        <begin position="534"/>
        <end position="611"/>
    </location>
</feature>
<feature type="domain" description="Thioester reductase (TE)" evidence="1">
    <location>
        <begin position="655"/>
        <end position="898"/>
    </location>
</feature>
<feature type="region of interest" description="Adenylation (A) domain" evidence="1">
    <location>
        <begin position="29"/>
        <end position="425"/>
    </location>
</feature>
<feature type="modified residue" description="O-(pantetheine 4'-phosphoryl)serine" evidence="2">
    <location>
        <position position="571"/>
    </location>
</feature>
<sequence length="1024" mass="112163">MPSHTFNPQAGYDLAVDRNLGLGEIFYNRAQKSHQAIAVCDGGAVLTYGQLHAKAYRLAQELSQWLRLTEKPVGIVVQHGMADVVAQMAVIYAGGSCAPMDPTLPDNQIQGRLKRLDAVCVLTDQANRHRDLGADVLCIDDFDIADLAPEDTLYPVATNLEHCAYLIHTSGTTAEPKAVQIAARSILHVAFYAPLEPVYDTDVVAHANNSSFDVSLFDIWVPLLRGAQIAVINKAVLLDPPMMAREIDRLGITVMATTTAVLNLAAFIYPKAFAKLRLVTIGGEAANVAAIRIILKNGPPAMLFNAYGPTECCVFCLAHQITPADVEHGSIGVSIGKPVGRTITYIAGDEGGESDQGELWIGGPGVSPGYFRQPEKNLAAFSDLGEAMTSLENPVRFYRTGDIVRRRPNGALEYVGRRDHQVKVRGFRIELEAVEAGLLKTGLFSDAVAMRIEMPQNGAGSILAAYVVPTDVSKPPTMDEALESAKSILPHYMVPQLELVPRLPLNRHLKVDRKQLAELFGRRWEDVSPAQPENASQDVRSALVSLWATVLASPLSTYGDDDDFLHLGGTSLQAAMLINQIRHKFDIEVSLLTLYDNTTLGALTSIIKQRLSGQSETLHNEKDSWVADSEIADDLSCPLDRPIDWCRDTEGRVFLTGGTGFVGAFLLADLLHMPQTSQVRCLVRATDAAVGQERLRAALDKYGLWEDGFADKLVAIAGLLEDDYLGMGREQFEEAASWASVVFHLGARVNYAQPYSLHRASNTLGTRNMVRFACAGRTKAIHYVSSIGCFGPTGSILGTTSVREDEPLLPHITALPYDHGYAQSQWVADALLRRLMDRGFPIAIYRPGFIVGHSQTGACNPDDFLSRLIDACREIGCYPQLPNQRKEFVPVDYVNAAILHIAASPASLGHAYHIVPPTRAVSIDMDNSMALVDRAGNSPMRPVSYKEWVERLAATSPKRLLPLQPMLAERVKDGLTRWELYENMPVYETTNTARALQNYPGGLQFPVLDTSLMKRYLDFLEAKG</sequence>
<reference key="1">
    <citation type="journal article" date="2021" name="J. Am. Chem. Soc.">
        <title>Biosynthesis of the Immunosuppressant (-)-FR901483.</title>
        <authorList>
            <person name="Zhang Z."/>
            <person name="Tamura Y."/>
            <person name="Tang M."/>
            <person name="Qiao T."/>
            <person name="Sato M."/>
            <person name="Otsu Y."/>
            <person name="Sasamura S."/>
            <person name="Taniguchi M."/>
            <person name="Watanabe K."/>
            <person name="Tang Y."/>
        </authorList>
    </citation>
    <scope>NUCLEOTIDE SEQUENCE [GENOMIC DNA]</scope>
    <scope>FUNCTION</scope>
    <scope>CATALYTIC ACTIVITY</scope>
    <scope>PATHWAY</scope>
    <source>
        <strain>11231</strain>
    </source>
</reference>